<comment type="function">
    <text evidence="1">Participates actively in the response to hyperosmotic and heat shock by preventing the aggregation of stress-denatured proteins and by disaggregating proteins, also in an autonomous, DnaK-independent fashion. Unfolded proteins bind initially to DnaJ; upon interaction with the DnaJ-bound protein, DnaK hydrolyzes its bound ATP, resulting in the formation of a stable complex. GrpE releases ADP from DnaK; ATP binding to DnaK triggers the release of the substrate protein, thus completing the reaction cycle. Several rounds of ATP-dependent interactions between DnaJ, DnaK and GrpE are required for fully efficient folding. Also involved, together with DnaK and GrpE, in the DNA replication of plasmids through activation of initiation proteins.</text>
</comment>
<comment type="cofactor">
    <cofactor evidence="1">
        <name>Zn(2+)</name>
        <dbReference type="ChEBI" id="CHEBI:29105"/>
    </cofactor>
    <text evidence="1">Binds 2 Zn(2+) ions per monomer.</text>
</comment>
<comment type="subunit">
    <text evidence="1">Homodimer.</text>
</comment>
<comment type="subcellular location">
    <subcellularLocation>
        <location evidence="1">Cytoplasm</location>
    </subcellularLocation>
</comment>
<comment type="domain">
    <text evidence="1">The J domain is necessary and sufficient to stimulate DnaK ATPase activity. Zinc center 1 plays an important role in the autonomous, DnaK-independent chaperone activity of DnaJ. Zinc center 2 is essential for interaction with DnaK and for DnaJ activity.</text>
</comment>
<comment type="similarity">
    <text evidence="1">Belongs to the DnaJ family.</text>
</comment>
<organism>
    <name type="scientific">Cupriavidus metallidurans (strain ATCC 43123 / DSM 2839 / NBRC 102507 / CH34)</name>
    <name type="common">Ralstonia metallidurans</name>
    <dbReference type="NCBI Taxonomy" id="266264"/>
    <lineage>
        <taxon>Bacteria</taxon>
        <taxon>Pseudomonadati</taxon>
        <taxon>Pseudomonadota</taxon>
        <taxon>Betaproteobacteria</taxon>
        <taxon>Burkholderiales</taxon>
        <taxon>Burkholderiaceae</taxon>
        <taxon>Cupriavidus</taxon>
    </lineage>
</organism>
<gene>
    <name evidence="1" type="primary">dnaJ</name>
    <name type="ordered locus">Rmet_2921</name>
</gene>
<keyword id="KW-0143">Chaperone</keyword>
<keyword id="KW-0963">Cytoplasm</keyword>
<keyword id="KW-0235">DNA replication</keyword>
<keyword id="KW-0479">Metal-binding</keyword>
<keyword id="KW-1185">Reference proteome</keyword>
<keyword id="KW-0677">Repeat</keyword>
<keyword id="KW-0346">Stress response</keyword>
<keyword id="KW-0862">Zinc</keyword>
<keyword id="KW-0863">Zinc-finger</keyword>
<dbReference type="EMBL" id="CP000352">
    <property type="protein sequence ID" value="ABF09794.1"/>
    <property type="molecule type" value="Genomic_DNA"/>
</dbReference>
<dbReference type="RefSeq" id="WP_008641963.1">
    <property type="nucleotide sequence ID" value="NC_007973.1"/>
</dbReference>
<dbReference type="SMR" id="Q1LJ82"/>
<dbReference type="STRING" id="266264.Rmet_2921"/>
<dbReference type="KEGG" id="rme:Rmet_2921"/>
<dbReference type="eggNOG" id="COG0484">
    <property type="taxonomic scope" value="Bacteria"/>
</dbReference>
<dbReference type="HOGENOM" id="CLU_017633_0_7_4"/>
<dbReference type="Proteomes" id="UP000002429">
    <property type="component" value="Chromosome"/>
</dbReference>
<dbReference type="GO" id="GO:0005737">
    <property type="term" value="C:cytoplasm"/>
    <property type="evidence" value="ECO:0007669"/>
    <property type="project" value="UniProtKB-SubCell"/>
</dbReference>
<dbReference type="GO" id="GO:0005524">
    <property type="term" value="F:ATP binding"/>
    <property type="evidence" value="ECO:0007669"/>
    <property type="project" value="InterPro"/>
</dbReference>
<dbReference type="GO" id="GO:0031072">
    <property type="term" value="F:heat shock protein binding"/>
    <property type="evidence" value="ECO:0007669"/>
    <property type="project" value="InterPro"/>
</dbReference>
<dbReference type="GO" id="GO:0051082">
    <property type="term" value="F:unfolded protein binding"/>
    <property type="evidence" value="ECO:0007669"/>
    <property type="project" value="UniProtKB-UniRule"/>
</dbReference>
<dbReference type="GO" id="GO:0008270">
    <property type="term" value="F:zinc ion binding"/>
    <property type="evidence" value="ECO:0007669"/>
    <property type="project" value="UniProtKB-UniRule"/>
</dbReference>
<dbReference type="GO" id="GO:0051085">
    <property type="term" value="P:chaperone cofactor-dependent protein refolding"/>
    <property type="evidence" value="ECO:0007669"/>
    <property type="project" value="TreeGrafter"/>
</dbReference>
<dbReference type="GO" id="GO:0006260">
    <property type="term" value="P:DNA replication"/>
    <property type="evidence" value="ECO:0007669"/>
    <property type="project" value="UniProtKB-KW"/>
</dbReference>
<dbReference type="GO" id="GO:0042026">
    <property type="term" value="P:protein refolding"/>
    <property type="evidence" value="ECO:0007669"/>
    <property type="project" value="TreeGrafter"/>
</dbReference>
<dbReference type="GO" id="GO:0009408">
    <property type="term" value="P:response to heat"/>
    <property type="evidence" value="ECO:0007669"/>
    <property type="project" value="InterPro"/>
</dbReference>
<dbReference type="CDD" id="cd06257">
    <property type="entry name" value="DnaJ"/>
    <property type="match status" value="1"/>
</dbReference>
<dbReference type="CDD" id="cd10747">
    <property type="entry name" value="DnaJ_C"/>
    <property type="match status" value="1"/>
</dbReference>
<dbReference type="FunFam" id="1.10.287.110:FF:000031">
    <property type="entry name" value="Molecular chaperone DnaJ"/>
    <property type="match status" value="1"/>
</dbReference>
<dbReference type="FunFam" id="2.10.230.10:FF:000002">
    <property type="entry name" value="Molecular chaperone DnaJ"/>
    <property type="match status" value="1"/>
</dbReference>
<dbReference type="FunFam" id="2.60.260.20:FF:000004">
    <property type="entry name" value="Molecular chaperone DnaJ"/>
    <property type="match status" value="1"/>
</dbReference>
<dbReference type="Gene3D" id="1.10.287.110">
    <property type="entry name" value="DnaJ domain"/>
    <property type="match status" value="1"/>
</dbReference>
<dbReference type="Gene3D" id="2.10.230.10">
    <property type="entry name" value="Heat shock protein DnaJ, cysteine-rich domain"/>
    <property type="match status" value="1"/>
</dbReference>
<dbReference type="Gene3D" id="2.60.260.20">
    <property type="entry name" value="Urease metallochaperone UreE, N-terminal domain"/>
    <property type="match status" value="2"/>
</dbReference>
<dbReference type="HAMAP" id="MF_01152">
    <property type="entry name" value="DnaJ"/>
    <property type="match status" value="1"/>
</dbReference>
<dbReference type="InterPro" id="IPR012724">
    <property type="entry name" value="DnaJ"/>
</dbReference>
<dbReference type="InterPro" id="IPR002939">
    <property type="entry name" value="DnaJ_C"/>
</dbReference>
<dbReference type="InterPro" id="IPR001623">
    <property type="entry name" value="DnaJ_domain"/>
</dbReference>
<dbReference type="InterPro" id="IPR018253">
    <property type="entry name" value="DnaJ_domain_CS"/>
</dbReference>
<dbReference type="InterPro" id="IPR008971">
    <property type="entry name" value="HSP40/DnaJ_pept-bd"/>
</dbReference>
<dbReference type="InterPro" id="IPR001305">
    <property type="entry name" value="HSP_DnaJ_Cys-rich_dom"/>
</dbReference>
<dbReference type="InterPro" id="IPR036410">
    <property type="entry name" value="HSP_DnaJ_Cys-rich_dom_sf"/>
</dbReference>
<dbReference type="InterPro" id="IPR036869">
    <property type="entry name" value="J_dom_sf"/>
</dbReference>
<dbReference type="NCBIfam" id="TIGR02349">
    <property type="entry name" value="DnaJ_bact"/>
    <property type="match status" value="1"/>
</dbReference>
<dbReference type="NCBIfam" id="NF008035">
    <property type="entry name" value="PRK10767.1"/>
    <property type="match status" value="1"/>
</dbReference>
<dbReference type="PANTHER" id="PTHR43096:SF48">
    <property type="entry name" value="CHAPERONE PROTEIN DNAJ"/>
    <property type="match status" value="1"/>
</dbReference>
<dbReference type="PANTHER" id="PTHR43096">
    <property type="entry name" value="DNAJ HOMOLOG 1, MITOCHONDRIAL-RELATED"/>
    <property type="match status" value="1"/>
</dbReference>
<dbReference type="Pfam" id="PF00226">
    <property type="entry name" value="DnaJ"/>
    <property type="match status" value="1"/>
</dbReference>
<dbReference type="Pfam" id="PF01556">
    <property type="entry name" value="DnaJ_C"/>
    <property type="match status" value="1"/>
</dbReference>
<dbReference type="Pfam" id="PF00684">
    <property type="entry name" value="DnaJ_CXXCXGXG"/>
    <property type="match status" value="1"/>
</dbReference>
<dbReference type="PRINTS" id="PR00625">
    <property type="entry name" value="JDOMAIN"/>
</dbReference>
<dbReference type="SMART" id="SM00271">
    <property type="entry name" value="DnaJ"/>
    <property type="match status" value="1"/>
</dbReference>
<dbReference type="SUPFAM" id="SSF46565">
    <property type="entry name" value="Chaperone J-domain"/>
    <property type="match status" value="1"/>
</dbReference>
<dbReference type="SUPFAM" id="SSF57938">
    <property type="entry name" value="DnaJ/Hsp40 cysteine-rich domain"/>
    <property type="match status" value="1"/>
</dbReference>
<dbReference type="SUPFAM" id="SSF49493">
    <property type="entry name" value="HSP40/DnaJ peptide-binding domain"/>
    <property type="match status" value="2"/>
</dbReference>
<dbReference type="PROSITE" id="PS00636">
    <property type="entry name" value="DNAJ_1"/>
    <property type="match status" value="1"/>
</dbReference>
<dbReference type="PROSITE" id="PS50076">
    <property type="entry name" value="DNAJ_2"/>
    <property type="match status" value="1"/>
</dbReference>
<dbReference type="PROSITE" id="PS51188">
    <property type="entry name" value="ZF_CR"/>
    <property type="match status" value="1"/>
</dbReference>
<sequence length="379" mass="40931">MAKRDYYEVLGVGKNASDDEIKKAYRKLAMKHHPDRNPDNKEAEEKFKEVKEAYEMLSDPEKKAAYDQYGHAGVDPNMAGGFGGGGFGGGGFAEAFGDIFGDIFGQAAGGGRRGGGPQAYRGADLRYSMEISLEQAAHGHEAQIRVPHWDDCEHCHGNGAEPGSSVETCPTCNGVGQVRVSQGFFTMQQTCPKCHGSGKFIPKPCTKCHGQGKLKSQKTLEVKIPAGIDEGMRIRSSGNGEPGINGGPPGDLYVEVHIKQHPVFERDGDDLHCQMPISFATAALGGDIEVPTLGGRASFPVPEGTQAGKTFRLRGKGIKGVRSGYPGDLYVHVNVETPVKLTEAQKDILRQFDRSVHEGGSRHSPQEQSWLDKVKSFFS</sequence>
<name>DNAJ_CUPMC</name>
<feature type="chain" id="PRO_1000085263" description="Chaperone protein DnaJ">
    <location>
        <begin position="1"/>
        <end position="379"/>
    </location>
</feature>
<feature type="domain" description="J" evidence="1">
    <location>
        <begin position="5"/>
        <end position="70"/>
    </location>
</feature>
<feature type="repeat" description="CXXCXGXG motif">
    <location>
        <begin position="152"/>
        <end position="159"/>
    </location>
</feature>
<feature type="repeat" description="CXXCXGXG motif">
    <location>
        <begin position="169"/>
        <end position="176"/>
    </location>
</feature>
<feature type="repeat" description="CXXCXGXG motif">
    <location>
        <begin position="191"/>
        <end position="198"/>
    </location>
</feature>
<feature type="repeat" description="CXXCXGXG motif">
    <location>
        <begin position="205"/>
        <end position="212"/>
    </location>
</feature>
<feature type="zinc finger region" description="CR-type" evidence="1">
    <location>
        <begin position="139"/>
        <end position="217"/>
    </location>
</feature>
<feature type="binding site" evidence="1">
    <location>
        <position position="152"/>
    </location>
    <ligand>
        <name>Zn(2+)</name>
        <dbReference type="ChEBI" id="CHEBI:29105"/>
        <label>1</label>
    </ligand>
</feature>
<feature type="binding site" evidence="1">
    <location>
        <position position="155"/>
    </location>
    <ligand>
        <name>Zn(2+)</name>
        <dbReference type="ChEBI" id="CHEBI:29105"/>
        <label>1</label>
    </ligand>
</feature>
<feature type="binding site" evidence="1">
    <location>
        <position position="169"/>
    </location>
    <ligand>
        <name>Zn(2+)</name>
        <dbReference type="ChEBI" id="CHEBI:29105"/>
        <label>2</label>
    </ligand>
</feature>
<feature type="binding site" evidence="1">
    <location>
        <position position="172"/>
    </location>
    <ligand>
        <name>Zn(2+)</name>
        <dbReference type="ChEBI" id="CHEBI:29105"/>
        <label>2</label>
    </ligand>
</feature>
<feature type="binding site" evidence="1">
    <location>
        <position position="191"/>
    </location>
    <ligand>
        <name>Zn(2+)</name>
        <dbReference type="ChEBI" id="CHEBI:29105"/>
        <label>2</label>
    </ligand>
</feature>
<feature type="binding site" evidence="1">
    <location>
        <position position="194"/>
    </location>
    <ligand>
        <name>Zn(2+)</name>
        <dbReference type="ChEBI" id="CHEBI:29105"/>
        <label>2</label>
    </ligand>
</feature>
<feature type="binding site" evidence="1">
    <location>
        <position position="205"/>
    </location>
    <ligand>
        <name>Zn(2+)</name>
        <dbReference type="ChEBI" id="CHEBI:29105"/>
        <label>1</label>
    </ligand>
</feature>
<feature type="binding site" evidence="1">
    <location>
        <position position="208"/>
    </location>
    <ligand>
        <name>Zn(2+)</name>
        <dbReference type="ChEBI" id="CHEBI:29105"/>
        <label>1</label>
    </ligand>
</feature>
<evidence type="ECO:0000255" key="1">
    <source>
        <dbReference type="HAMAP-Rule" id="MF_01152"/>
    </source>
</evidence>
<protein>
    <recommendedName>
        <fullName evidence="1">Chaperone protein DnaJ</fullName>
    </recommendedName>
</protein>
<proteinExistence type="inferred from homology"/>
<accession>Q1LJ82</accession>
<reference key="1">
    <citation type="journal article" date="2010" name="PLoS ONE">
        <title>The complete genome sequence of Cupriavidus metallidurans strain CH34, a master survivalist in harsh and anthropogenic environments.</title>
        <authorList>
            <person name="Janssen P.J."/>
            <person name="Van Houdt R."/>
            <person name="Moors H."/>
            <person name="Monsieurs P."/>
            <person name="Morin N."/>
            <person name="Michaux A."/>
            <person name="Benotmane M.A."/>
            <person name="Leys N."/>
            <person name="Vallaeys T."/>
            <person name="Lapidus A."/>
            <person name="Monchy S."/>
            <person name="Medigue C."/>
            <person name="Taghavi S."/>
            <person name="McCorkle S."/>
            <person name="Dunn J."/>
            <person name="van der Lelie D."/>
            <person name="Mergeay M."/>
        </authorList>
    </citation>
    <scope>NUCLEOTIDE SEQUENCE [LARGE SCALE GENOMIC DNA]</scope>
    <source>
        <strain>ATCC 43123 / DSM 2839 / NBRC 102507 / CH34</strain>
    </source>
</reference>